<name>HNF6_RAT</name>
<feature type="chain" id="PRO_0000202404" description="Hepatocyte nuclear factor 6">
    <location>
        <begin position="1"/>
        <end position="465"/>
    </location>
</feature>
<feature type="DNA-binding region" description="CUT" evidence="2">
    <location>
        <begin position="283"/>
        <end position="369"/>
    </location>
</feature>
<feature type="DNA-binding region" description="Homeobox" evidence="1">
    <location>
        <begin position="385"/>
        <end position="444"/>
    </location>
</feature>
<feature type="region of interest" description="Disordered" evidence="3">
    <location>
        <begin position="15"/>
        <end position="84"/>
    </location>
</feature>
<feature type="region of interest" description="Disordered" evidence="3">
    <location>
        <begin position="119"/>
        <end position="141"/>
    </location>
</feature>
<feature type="region of interest" description="Disordered" evidence="3">
    <location>
        <begin position="442"/>
        <end position="465"/>
    </location>
</feature>
<feature type="compositionally biased region" description="Basic residues" evidence="3">
    <location>
        <begin position="123"/>
        <end position="140"/>
    </location>
</feature>
<feature type="compositionally biased region" description="Low complexity" evidence="3">
    <location>
        <begin position="448"/>
        <end position="465"/>
    </location>
</feature>
<feature type="splice variant" id="VSP_002312" description="In isoform Beta." evidence="4">
    <original>A</original>
    <variation>AESAMGGSVPSLRITSGGPQLSVPPLP</variation>
    <location>
        <position position="368"/>
    </location>
</feature>
<feature type="helix" evidence="6">
    <location>
        <begin position="294"/>
        <end position="307"/>
    </location>
</feature>
<feature type="helix" evidence="6">
    <location>
        <begin position="312"/>
        <end position="318"/>
    </location>
</feature>
<feature type="helix" evidence="6">
    <location>
        <begin position="324"/>
        <end position="332"/>
    </location>
</feature>
<feature type="helix" evidence="6">
    <location>
        <begin position="337"/>
        <end position="339"/>
    </location>
</feature>
<feature type="helix" evidence="6">
    <location>
        <begin position="344"/>
        <end position="355"/>
    </location>
</feature>
<feature type="helix" evidence="6">
    <location>
        <begin position="358"/>
        <end position="364"/>
    </location>
</feature>
<feature type="helix" evidence="6">
    <location>
        <begin position="394"/>
        <end position="406"/>
    </location>
</feature>
<feature type="helix" evidence="6">
    <location>
        <begin position="412"/>
        <end position="422"/>
    </location>
</feature>
<feature type="helix" evidence="6">
    <location>
        <begin position="426"/>
        <end position="438"/>
    </location>
</feature>
<evidence type="ECO:0000255" key="1">
    <source>
        <dbReference type="PROSITE-ProRule" id="PRU00108"/>
    </source>
</evidence>
<evidence type="ECO:0000255" key="2">
    <source>
        <dbReference type="PROSITE-ProRule" id="PRU00374"/>
    </source>
</evidence>
<evidence type="ECO:0000256" key="3">
    <source>
        <dbReference type="SAM" id="MobiDB-lite"/>
    </source>
</evidence>
<evidence type="ECO:0000303" key="4">
    <source>
    </source>
</evidence>
<evidence type="ECO:0000305" key="5"/>
<evidence type="ECO:0007829" key="6">
    <source>
        <dbReference type="PDB" id="2D5V"/>
    </source>
</evidence>
<gene>
    <name type="primary">Onecut1</name>
    <name type="synonym">Hnf6</name>
    <name type="synonym">Hnf6a</name>
</gene>
<organism>
    <name type="scientific">Rattus norvegicus</name>
    <name type="common">Rat</name>
    <dbReference type="NCBI Taxonomy" id="10116"/>
    <lineage>
        <taxon>Eukaryota</taxon>
        <taxon>Metazoa</taxon>
        <taxon>Chordata</taxon>
        <taxon>Craniata</taxon>
        <taxon>Vertebrata</taxon>
        <taxon>Euteleostomi</taxon>
        <taxon>Mammalia</taxon>
        <taxon>Eutheria</taxon>
        <taxon>Euarchontoglires</taxon>
        <taxon>Glires</taxon>
        <taxon>Rodentia</taxon>
        <taxon>Myomorpha</taxon>
        <taxon>Muroidea</taxon>
        <taxon>Muridae</taxon>
        <taxon>Murinae</taxon>
        <taxon>Rattus</taxon>
    </lineage>
</organism>
<protein>
    <recommendedName>
        <fullName>Hepatocyte nuclear factor 6</fullName>
        <shortName>HNF-6</shortName>
    </recommendedName>
    <alternativeName>
        <fullName>One cut domain family member 1</fullName>
    </alternativeName>
    <alternativeName>
        <fullName>One cut homeobox 1</fullName>
    </alternativeName>
</protein>
<proteinExistence type="evidence at protein level"/>
<comment type="function">
    <text>Transcriptional activator. Binds the consensus sequence 5'-DHWATTGAYTWWD-3' on a variety of gene promoters such as those of HNF3B and TTR. Important for liver genes transcription. The affinity of HNF-6-alpha and HNF-6-beta for DNA differs depending on the target sequence.</text>
</comment>
<comment type="subunit">
    <text>Binds DNA as a monomer.</text>
</comment>
<comment type="subcellular location">
    <subcellularLocation>
        <location>Nucleus</location>
    </subcellularLocation>
</comment>
<comment type="alternative products">
    <event type="alternative splicing"/>
    <isoform>
        <id>P70512-1</id>
        <name>Alpha</name>
        <sequence type="displayed"/>
    </isoform>
    <isoform>
        <id>P70512-2</id>
        <name>Beta</name>
        <sequence type="described" ref="VSP_002312"/>
    </isoform>
</comment>
<comment type="tissue specificity">
    <text>Expressed in liver, brain, spleen and testis.</text>
</comment>
<comment type="similarity">
    <text evidence="5">Belongs to the CUT homeobox family.</text>
</comment>
<dbReference type="EMBL" id="X96553">
    <property type="protein sequence ID" value="CAA65389.1"/>
    <property type="molecule type" value="Genomic_DNA"/>
</dbReference>
<dbReference type="EMBL" id="Y14933">
    <property type="protein sequence ID" value="CAA75150.1"/>
    <property type="molecule type" value="mRNA"/>
</dbReference>
<dbReference type="RefSeq" id="NP_073162.1">
    <property type="nucleotide sequence ID" value="NM_022671.2"/>
</dbReference>
<dbReference type="PDB" id="2D5V">
    <property type="method" value="X-ray"/>
    <property type="resolution" value="2.00 A"/>
    <property type="chains" value="A/B=289-444"/>
</dbReference>
<dbReference type="PDBsum" id="2D5V"/>
<dbReference type="BMRB" id="P70512"/>
<dbReference type="SMR" id="P70512"/>
<dbReference type="FunCoup" id="P70512">
    <property type="interactions" value="244"/>
</dbReference>
<dbReference type="STRING" id="10116.ENSRNOP00000038480"/>
<dbReference type="PhosphoSitePlus" id="P70512"/>
<dbReference type="PaxDb" id="10116-ENSRNOP00000010739"/>
<dbReference type="GeneID" id="25231"/>
<dbReference type="KEGG" id="rno:25231"/>
<dbReference type="UCSC" id="RGD:2811">
    <molecule id="P70512-1"/>
    <property type="organism name" value="rat"/>
</dbReference>
<dbReference type="AGR" id="RGD:2811"/>
<dbReference type="CTD" id="3175"/>
<dbReference type="RGD" id="2811">
    <property type="gene designation" value="Onecut1"/>
</dbReference>
<dbReference type="eggNOG" id="KOG2252">
    <property type="taxonomic scope" value="Eukaryota"/>
</dbReference>
<dbReference type="InParanoid" id="P70512"/>
<dbReference type="OrthoDB" id="10068888at2759"/>
<dbReference type="EvolutionaryTrace" id="P70512"/>
<dbReference type="PRO" id="PR:P70512"/>
<dbReference type="Proteomes" id="UP000002494">
    <property type="component" value="Unplaced"/>
</dbReference>
<dbReference type="GO" id="GO:0005634">
    <property type="term" value="C:nucleus"/>
    <property type="evidence" value="ECO:0000266"/>
    <property type="project" value="RGD"/>
</dbReference>
<dbReference type="GO" id="GO:0003682">
    <property type="term" value="F:chromatin binding"/>
    <property type="evidence" value="ECO:0000266"/>
    <property type="project" value="RGD"/>
</dbReference>
<dbReference type="GO" id="GO:0003677">
    <property type="term" value="F:DNA binding"/>
    <property type="evidence" value="ECO:0000315"/>
    <property type="project" value="RGD"/>
</dbReference>
<dbReference type="GO" id="GO:0001228">
    <property type="term" value="F:DNA-binding transcription activator activity, RNA polymerase II-specific"/>
    <property type="evidence" value="ECO:0000314"/>
    <property type="project" value="BHF-UCL"/>
</dbReference>
<dbReference type="GO" id="GO:0003700">
    <property type="term" value="F:DNA-binding transcription factor activity"/>
    <property type="evidence" value="ECO:0000266"/>
    <property type="project" value="RGD"/>
</dbReference>
<dbReference type="GO" id="GO:0000981">
    <property type="term" value="F:DNA-binding transcription factor activity, RNA polymerase II-specific"/>
    <property type="evidence" value="ECO:0000314"/>
    <property type="project" value="RGD"/>
</dbReference>
<dbReference type="GO" id="GO:0000978">
    <property type="term" value="F:RNA polymerase II cis-regulatory region sequence-specific DNA binding"/>
    <property type="evidence" value="ECO:0000266"/>
    <property type="project" value="RGD"/>
</dbReference>
<dbReference type="GO" id="GO:1990837">
    <property type="term" value="F:sequence-specific double-stranded DNA binding"/>
    <property type="evidence" value="ECO:0000266"/>
    <property type="project" value="RGD"/>
</dbReference>
<dbReference type="GO" id="GO:0009653">
    <property type="term" value="P:anatomical structure morphogenesis"/>
    <property type="evidence" value="ECO:0000266"/>
    <property type="project" value="RGD"/>
</dbReference>
<dbReference type="GO" id="GO:0030183">
    <property type="term" value="P:B cell differentiation"/>
    <property type="evidence" value="ECO:0000266"/>
    <property type="project" value="RGD"/>
</dbReference>
<dbReference type="GO" id="GO:0045165">
    <property type="term" value="P:cell fate commitment"/>
    <property type="evidence" value="ECO:0000266"/>
    <property type="project" value="RGD"/>
</dbReference>
<dbReference type="GO" id="GO:0016477">
    <property type="term" value="P:cell migration"/>
    <property type="evidence" value="ECO:0000266"/>
    <property type="project" value="RGD"/>
</dbReference>
<dbReference type="GO" id="GO:0060271">
    <property type="term" value="P:cilium assembly"/>
    <property type="evidence" value="ECO:0000266"/>
    <property type="project" value="RGD"/>
</dbReference>
<dbReference type="GO" id="GO:0031018">
    <property type="term" value="P:endocrine pancreas development"/>
    <property type="evidence" value="ECO:0000266"/>
    <property type="project" value="RGD"/>
</dbReference>
<dbReference type="GO" id="GO:0007492">
    <property type="term" value="P:endoderm development"/>
    <property type="evidence" value="ECO:0000266"/>
    <property type="project" value="RGD"/>
</dbReference>
<dbReference type="GO" id="GO:0035883">
    <property type="term" value="P:enteroendocrine cell differentiation"/>
    <property type="evidence" value="ECO:0000266"/>
    <property type="project" value="RGD"/>
</dbReference>
<dbReference type="GO" id="GO:0002064">
    <property type="term" value="P:epithelial cell development"/>
    <property type="evidence" value="ECO:0000266"/>
    <property type="project" value="RGD"/>
</dbReference>
<dbReference type="GO" id="GO:0006006">
    <property type="term" value="P:glucose metabolic process"/>
    <property type="evidence" value="ECO:0000315"/>
    <property type="project" value="RGD"/>
</dbReference>
<dbReference type="GO" id="GO:0001889">
    <property type="term" value="P:liver development"/>
    <property type="evidence" value="ECO:0000266"/>
    <property type="project" value="RGD"/>
</dbReference>
<dbReference type="GO" id="GO:0030512">
    <property type="term" value="P:negative regulation of transforming growth factor beta receptor signaling pathway"/>
    <property type="evidence" value="ECO:0000266"/>
    <property type="project" value="RGD"/>
</dbReference>
<dbReference type="GO" id="GO:0007219">
    <property type="term" value="P:Notch signaling pathway"/>
    <property type="evidence" value="ECO:0000266"/>
    <property type="project" value="RGD"/>
</dbReference>
<dbReference type="GO" id="GO:0031016">
    <property type="term" value="P:pancreas development"/>
    <property type="evidence" value="ECO:0000266"/>
    <property type="project" value="RGD"/>
</dbReference>
<dbReference type="GO" id="GO:0003310">
    <property type="term" value="P:pancreatic A cell differentiation"/>
    <property type="evidence" value="ECO:0000266"/>
    <property type="project" value="RGD"/>
</dbReference>
<dbReference type="GO" id="GO:0003311">
    <property type="term" value="P:pancreatic D cell differentiation"/>
    <property type="evidence" value="ECO:0000266"/>
    <property type="project" value="RGD"/>
</dbReference>
<dbReference type="GO" id="GO:0030335">
    <property type="term" value="P:positive regulation of cell migration"/>
    <property type="evidence" value="ECO:0000266"/>
    <property type="project" value="RGD"/>
</dbReference>
<dbReference type="GO" id="GO:0045944">
    <property type="term" value="P:positive regulation of transcription by RNA polymerase II"/>
    <property type="evidence" value="ECO:0000314"/>
    <property type="project" value="BHF-UCL"/>
</dbReference>
<dbReference type="GO" id="GO:0001952">
    <property type="term" value="P:regulation of cell-matrix adhesion"/>
    <property type="evidence" value="ECO:0000266"/>
    <property type="project" value="RGD"/>
</dbReference>
<dbReference type="GO" id="GO:0006357">
    <property type="term" value="P:regulation of transcription by RNA polymerase II"/>
    <property type="evidence" value="ECO:0000266"/>
    <property type="project" value="RGD"/>
</dbReference>
<dbReference type="GO" id="GO:0048536">
    <property type="term" value="P:spleen development"/>
    <property type="evidence" value="ECO:0000266"/>
    <property type="project" value="RGD"/>
</dbReference>
<dbReference type="GO" id="GO:0007179">
    <property type="term" value="P:transforming growth factor beta receptor signaling pathway"/>
    <property type="evidence" value="ECO:0000266"/>
    <property type="project" value="RGD"/>
</dbReference>
<dbReference type="GO" id="GO:0003309">
    <property type="term" value="P:type B pancreatic cell differentiation"/>
    <property type="evidence" value="ECO:0000266"/>
    <property type="project" value="RGD"/>
</dbReference>
<dbReference type="CDD" id="cd00086">
    <property type="entry name" value="homeodomain"/>
    <property type="match status" value="1"/>
</dbReference>
<dbReference type="FunFam" id="1.10.10.60:FF:000054">
    <property type="entry name" value="One cut domain family member"/>
    <property type="match status" value="1"/>
</dbReference>
<dbReference type="FunFam" id="1.10.260.40:FF:000005">
    <property type="entry name" value="One cut domain family member"/>
    <property type="match status" value="1"/>
</dbReference>
<dbReference type="Gene3D" id="1.10.10.60">
    <property type="entry name" value="Homeodomain-like"/>
    <property type="match status" value="1"/>
</dbReference>
<dbReference type="Gene3D" id="1.10.260.40">
    <property type="entry name" value="lambda repressor-like DNA-binding domains"/>
    <property type="match status" value="1"/>
</dbReference>
<dbReference type="InterPro" id="IPR003350">
    <property type="entry name" value="CUT_dom"/>
</dbReference>
<dbReference type="InterPro" id="IPR051649">
    <property type="entry name" value="CUT_Homeobox"/>
</dbReference>
<dbReference type="InterPro" id="IPR001356">
    <property type="entry name" value="HD"/>
</dbReference>
<dbReference type="InterPro" id="IPR009057">
    <property type="entry name" value="Homeodomain-like_sf"/>
</dbReference>
<dbReference type="InterPro" id="IPR010982">
    <property type="entry name" value="Lambda_DNA-bd_dom_sf"/>
</dbReference>
<dbReference type="PANTHER" id="PTHR14057:SF9">
    <property type="entry name" value="HEPATOCYTE NUCLEAR FACTOR 6"/>
    <property type="match status" value="1"/>
</dbReference>
<dbReference type="PANTHER" id="PTHR14057">
    <property type="entry name" value="TRANSCRIPTION FACTOR ONECUT"/>
    <property type="match status" value="1"/>
</dbReference>
<dbReference type="Pfam" id="PF02376">
    <property type="entry name" value="CUT"/>
    <property type="match status" value="1"/>
</dbReference>
<dbReference type="Pfam" id="PF00046">
    <property type="entry name" value="Homeodomain"/>
    <property type="match status" value="1"/>
</dbReference>
<dbReference type="SMART" id="SM01109">
    <property type="entry name" value="CUT"/>
    <property type="match status" value="1"/>
</dbReference>
<dbReference type="SMART" id="SM00389">
    <property type="entry name" value="HOX"/>
    <property type="match status" value="1"/>
</dbReference>
<dbReference type="SUPFAM" id="SSF46689">
    <property type="entry name" value="Homeodomain-like"/>
    <property type="match status" value="1"/>
</dbReference>
<dbReference type="SUPFAM" id="SSF47413">
    <property type="entry name" value="lambda repressor-like DNA-binding domains"/>
    <property type="match status" value="1"/>
</dbReference>
<dbReference type="PROSITE" id="PS51042">
    <property type="entry name" value="CUT"/>
    <property type="match status" value="1"/>
</dbReference>
<dbReference type="PROSITE" id="PS50071">
    <property type="entry name" value="HOMEOBOX_2"/>
    <property type="match status" value="1"/>
</dbReference>
<keyword id="KW-0002">3D-structure</keyword>
<keyword id="KW-0010">Activator</keyword>
<keyword id="KW-0025">Alternative splicing</keyword>
<keyword id="KW-0238">DNA-binding</keyword>
<keyword id="KW-0371">Homeobox</keyword>
<keyword id="KW-0539">Nucleus</keyword>
<keyword id="KW-1185">Reference proteome</keyword>
<keyword id="KW-0804">Transcription</keyword>
<keyword id="KW-0805">Transcription regulation</keyword>
<sequence>MNAQLTMEAIGELHGVSHEPVPAPADLLGGSPHARSSVGHRGSHLPPAHPRSMGMASLLDGGSGGSDYHHHHRAPEHSLAGPLHPTMTMACETPPGMSMPTTYTTLTPLQPLPPISTVSDKFPHHHHHHHHHHHPHHHQRLAGNVSGSFTLMRDERGLASMNNLYTPYHKDVAGMGQSLSPLSGSGLGSIHNSQQGLPHYAHPGAAMPTDKMLTPNDFEAHHPAMLGRHGEQHLTPTSAGMVPINGLPPHHPHAHLNAQGHGQLLGTAREPNPSVTGAQVSNGSNSGQMEEINTKEVAQRITTELKRYSIPQAIFAQRVLCRSQGTLSDLLRNPKPWSKLKSGRETFRRMWKWLQEPEFQRMSALRLAACKRKEQEHGKDRGNTPKKPRLVFTDVQRRTLHAIFKENKRPSKELQITISQQLGLELSTVSNFFMNARRRSLDKWQDEGSSNSGNSSSSSSTCTKA</sequence>
<accession>P70512</accession>
<accession>O88755</accession>
<reference key="1">
    <citation type="journal article" date="1996" name="Proc. Natl. Acad. Sci. U.S.A.">
        <title>Hepatocyte nuclear factor 6, a transcription factor that contains a novel type of homeodomain and a single cut domain.</title>
        <authorList>
            <person name="Lemaigre F.P."/>
            <person name="Durviaux S.M."/>
            <person name="Truong O."/>
            <person name="Lannoy V.J."/>
            <person name="Hsuan J.J."/>
            <person name="Rousseau G.G."/>
        </authorList>
    </citation>
    <scope>NUCLEOTIDE SEQUENCE [GENOMIC DNA] (ISOFORM ALPHA)</scope>
    <source>
        <strain>Sprague-Dawley</strain>
        <tissue>Liver</tissue>
    </source>
</reference>
<reference key="2">
    <citation type="journal article" date="1998" name="J. Biol. Chem.">
        <title>Isoforms of hepatocyte nuclear factor-6 differ in DNA-binding properties, contain a bifunctional homeodomain, and define the new ONECUT class of homeodomain proteins.</title>
        <authorList>
            <person name="Lannoy V.J."/>
            <person name="Buerglin T.R."/>
            <person name="Rousseau G.G."/>
            <person name="Lemaigre F.P."/>
        </authorList>
    </citation>
    <scope>NUCLEOTIDE SEQUENCE [MRNA] (ISOFORM BETA)</scope>
    <source>
        <strain>Wistar</strain>
    </source>
</reference>
<reference key="3">
    <citation type="journal article" date="1996" name="Mol. Cell. Biol.">
        <title>The transcriptional activator hepatocyte nuclear factor 6 regulates liver gene expression.</title>
        <authorList>
            <person name="Samadani U."/>
            <person name="Costa R.H."/>
        </authorList>
    </citation>
    <scope>CHARACTERIZATION</scope>
</reference>